<accession>A0QV24</accession>
<accession>I7G869</accession>
<organism>
    <name type="scientific">Mycolicibacterium smegmatis (strain ATCC 700084 / mc(2)155)</name>
    <name type="common">Mycobacterium smegmatis</name>
    <dbReference type="NCBI Taxonomy" id="246196"/>
    <lineage>
        <taxon>Bacteria</taxon>
        <taxon>Bacillati</taxon>
        <taxon>Actinomycetota</taxon>
        <taxon>Actinomycetes</taxon>
        <taxon>Mycobacteriales</taxon>
        <taxon>Mycobacteriaceae</taxon>
        <taxon>Mycolicibacterium</taxon>
    </lineage>
</organism>
<evidence type="ECO:0000255" key="1">
    <source>
        <dbReference type="PROSITE-ProRule" id="PRU00520"/>
    </source>
</evidence>
<evidence type="ECO:0000305" key="2"/>
<sequence>MTGPGPRRDEARLSAWVHGHVQGVGFRWWTRARALELGLTGFASNRPDGRVHVVAQGSREACEKLLELLRSGETPGSVDKVIADWAEPDATMTGFSER</sequence>
<name>ACYP_MYCS2</name>
<proteinExistence type="inferred from homology"/>
<protein>
    <recommendedName>
        <fullName>Acylphosphatase</fullName>
        <ecNumber>3.6.1.7</ecNumber>
    </recommendedName>
    <alternativeName>
        <fullName>Acylphosphate phosphohydrolase</fullName>
    </alternativeName>
</protein>
<keyword id="KW-0378">Hydrolase</keyword>
<keyword id="KW-1185">Reference proteome</keyword>
<reference key="1">
    <citation type="submission" date="2006-10" db="EMBL/GenBank/DDBJ databases">
        <authorList>
            <person name="Fleischmann R.D."/>
            <person name="Dodson R.J."/>
            <person name="Haft D.H."/>
            <person name="Merkel J.S."/>
            <person name="Nelson W.C."/>
            <person name="Fraser C.M."/>
        </authorList>
    </citation>
    <scope>NUCLEOTIDE SEQUENCE [LARGE SCALE GENOMIC DNA]</scope>
    <source>
        <strain>ATCC 700084 / mc(2)155</strain>
    </source>
</reference>
<reference key="2">
    <citation type="journal article" date="2007" name="Genome Biol.">
        <title>Interrupted coding sequences in Mycobacterium smegmatis: authentic mutations or sequencing errors?</title>
        <authorList>
            <person name="Deshayes C."/>
            <person name="Perrodou E."/>
            <person name="Gallien S."/>
            <person name="Euphrasie D."/>
            <person name="Schaeffer C."/>
            <person name="Van-Dorsselaer A."/>
            <person name="Poch O."/>
            <person name="Lecompte O."/>
            <person name="Reyrat J.-M."/>
        </authorList>
    </citation>
    <scope>NUCLEOTIDE SEQUENCE [LARGE SCALE GENOMIC DNA]</scope>
    <source>
        <strain>ATCC 700084 / mc(2)155</strain>
    </source>
</reference>
<reference key="3">
    <citation type="journal article" date="2009" name="Genome Res.">
        <title>Ortho-proteogenomics: multiple proteomes investigation through orthology and a new MS-based protocol.</title>
        <authorList>
            <person name="Gallien S."/>
            <person name="Perrodou E."/>
            <person name="Carapito C."/>
            <person name="Deshayes C."/>
            <person name="Reyrat J.-M."/>
            <person name="Van Dorsselaer A."/>
            <person name="Poch O."/>
            <person name="Schaeffer C."/>
            <person name="Lecompte O."/>
        </authorList>
    </citation>
    <scope>NUCLEOTIDE SEQUENCE [LARGE SCALE GENOMIC DNA]</scope>
    <source>
        <strain>ATCC 700084 / mc(2)155</strain>
    </source>
</reference>
<dbReference type="EC" id="3.6.1.7"/>
<dbReference type="EMBL" id="CP000480">
    <property type="protein sequence ID" value="ABK73038.1"/>
    <property type="molecule type" value="Genomic_DNA"/>
</dbReference>
<dbReference type="EMBL" id="CP001663">
    <property type="protein sequence ID" value="AFP38829.1"/>
    <property type="molecule type" value="Genomic_DNA"/>
</dbReference>
<dbReference type="RefSeq" id="WP_011728332.1">
    <property type="nucleotide sequence ID" value="NZ_SIJM01000012.1"/>
</dbReference>
<dbReference type="RefSeq" id="YP_886762.1">
    <property type="nucleotide sequence ID" value="NC_008596.1"/>
</dbReference>
<dbReference type="SMR" id="A0QV24"/>
<dbReference type="STRING" id="246196.MSMEG_2422"/>
<dbReference type="PaxDb" id="246196-MSMEI_2361"/>
<dbReference type="KEGG" id="msb:LJ00_12045"/>
<dbReference type="KEGG" id="msg:MSMEI_2361"/>
<dbReference type="KEGG" id="msm:MSMEG_2422"/>
<dbReference type="PATRIC" id="fig|246196.19.peg.2387"/>
<dbReference type="eggNOG" id="COG1254">
    <property type="taxonomic scope" value="Bacteria"/>
</dbReference>
<dbReference type="OrthoDB" id="3182027at2"/>
<dbReference type="Proteomes" id="UP000000757">
    <property type="component" value="Chromosome"/>
</dbReference>
<dbReference type="Proteomes" id="UP000006158">
    <property type="component" value="Chromosome"/>
</dbReference>
<dbReference type="GO" id="GO:0003998">
    <property type="term" value="F:acylphosphatase activity"/>
    <property type="evidence" value="ECO:0007669"/>
    <property type="project" value="UniProtKB-EC"/>
</dbReference>
<dbReference type="Gene3D" id="3.30.70.100">
    <property type="match status" value="1"/>
</dbReference>
<dbReference type="InterPro" id="IPR020456">
    <property type="entry name" value="Acylphosphatase"/>
</dbReference>
<dbReference type="InterPro" id="IPR001792">
    <property type="entry name" value="Acylphosphatase-like_dom"/>
</dbReference>
<dbReference type="InterPro" id="IPR036046">
    <property type="entry name" value="Acylphosphatase-like_dom_sf"/>
</dbReference>
<dbReference type="InterPro" id="IPR017968">
    <property type="entry name" value="Acylphosphatase_CS"/>
</dbReference>
<dbReference type="NCBIfam" id="NF010997">
    <property type="entry name" value="PRK14422.1"/>
    <property type="match status" value="1"/>
</dbReference>
<dbReference type="PANTHER" id="PTHR47268">
    <property type="entry name" value="ACYLPHOSPHATASE"/>
    <property type="match status" value="1"/>
</dbReference>
<dbReference type="PANTHER" id="PTHR47268:SF4">
    <property type="entry name" value="ACYLPHOSPHATASE"/>
    <property type="match status" value="1"/>
</dbReference>
<dbReference type="Pfam" id="PF00708">
    <property type="entry name" value="Acylphosphatase"/>
    <property type="match status" value="1"/>
</dbReference>
<dbReference type="SUPFAM" id="SSF54975">
    <property type="entry name" value="Acylphosphatase/BLUF domain-like"/>
    <property type="match status" value="1"/>
</dbReference>
<dbReference type="PROSITE" id="PS00150">
    <property type="entry name" value="ACYLPHOSPHATASE_1"/>
    <property type="match status" value="1"/>
</dbReference>
<dbReference type="PROSITE" id="PS51160">
    <property type="entry name" value="ACYLPHOSPHATASE_3"/>
    <property type="match status" value="1"/>
</dbReference>
<comment type="catalytic activity">
    <reaction>
        <text>an acyl phosphate + H2O = a carboxylate + phosphate + H(+)</text>
        <dbReference type="Rhea" id="RHEA:14965"/>
        <dbReference type="ChEBI" id="CHEBI:15377"/>
        <dbReference type="ChEBI" id="CHEBI:15378"/>
        <dbReference type="ChEBI" id="CHEBI:29067"/>
        <dbReference type="ChEBI" id="CHEBI:43474"/>
        <dbReference type="ChEBI" id="CHEBI:59918"/>
        <dbReference type="EC" id="3.6.1.7"/>
    </reaction>
</comment>
<comment type="similarity">
    <text evidence="2">Belongs to the acylphosphatase family.</text>
</comment>
<gene>
    <name type="primary">acyP</name>
    <name type="ordered locus">MSMEG_2422</name>
    <name type="ordered locus">MSMEI_2361</name>
</gene>
<feature type="chain" id="PRO_0000326750" description="Acylphosphatase">
    <location>
        <begin position="1"/>
        <end position="98"/>
    </location>
</feature>
<feature type="domain" description="Acylphosphatase-like" evidence="1">
    <location>
        <begin position="12"/>
        <end position="98"/>
    </location>
</feature>
<feature type="active site" evidence="1">
    <location>
        <position position="27"/>
    </location>
</feature>
<feature type="active site" evidence="1">
    <location>
        <position position="45"/>
    </location>
</feature>